<reference key="1">
    <citation type="journal article" date="2007" name="PLoS Genet.">
        <title>Patterns and implications of gene gain and loss in the evolution of Prochlorococcus.</title>
        <authorList>
            <person name="Kettler G.C."/>
            <person name="Martiny A.C."/>
            <person name="Huang K."/>
            <person name="Zucker J."/>
            <person name="Coleman M.L."/>
            <person name="Rodrigue S."/>
            <person name="Chen F."/>
            <person name="Lapidus A."/>
            <person name="Ferriera S."/>
            <person name="Johnson J."/>
            <person name="Steglich C."/>
            <person name="Church G.M."/>
            <person name="Richardson P."/>
            <person name="Chisholm S.W."/>
        </authorList>
    </citation>
    <scope>NUCLEOTIDE SEQUENCE [LARGE SCALE GENOMIC DNA]</scope>
    <source>
        <strain>MIT 9211</strain>
    </source>
</reference>
<gene>
    <name evidence="1" type="primary">truA</name>
    <name type="ordered locus">P9211_16531</name>
</gene>
<name>TRUA_PROM4</name>
<organism>
    <name type="scientific">Prochlorococcus marinus (strain MIT 9211)</name>
    <dbReference type="NCBI Taxonomy" id="93059"/>
    <lineage>
        <taxon>Bacteria</taxon>
        <taxon>Bacillati</taxon>
        <taxon>Cyanobacteriota</taxon>
        <taxon>Cyanophyceae</taxon>
        <taxon>Synechococcales</taxon>
        <taxon>Prochlorococcaceae</taxon>
        <taxon>Prochlorococcus</taxon>
    </lineage>
</organism>
<comment type="function">
    <text evidence="1">Formation of pseudouridine at positions 38, 39 and 40 in the anticodon stem and loop of transfer RNAs.</text>
</comment>
<comment type="catalytic activity">
    <reaction evidence="1">
        <text>uridine(38/39/40) in tRNA = pseudouridine(38/39/40) in tRNA</text>
        <dbReference type="Rhea" id="RHEA:22376"/>
        <dbReference type="Rhea" id="RHEA-COMP:10085"/>
        <dbReference type="Rhea" id="RHEA-COMP:10087"/>
        <dbReference type="ChEBI" id="CHEBI:65314"/>
        <dbReference type="ChEBI" id="CHEBI:65315"/>
        <dbReference type="EC" id="5.4.99.12"/>
    </reaction>
</comment>
<comment type="subunit">
    <text evidence="1">Homodimer.</text>
</comment>
<comment type="similarity">
    <text evidence="1">Belongs to the tRNA pseudouridine synthase TruA family.</text>
</comment>
<sequence length="289" mass="32616">METEASNESIEKSLPKRIALLIQYNGSGFCGWQRQKEGNSVQSILEEAVSSLDPFQPIKVVAAGRTDSGVHASGQVAHFDCSGFIPANRWAAALNGRLPKAIRVRYSALRPITWHACFSATYRRYRYTIYNGCKPNLFLSPWCWHRYQFRLDENLMNLALQGIKGFHDFTAFQRAGSNRPNALTTVEDVHLFRQGDLVSIDIQATGFLYGMVRLLVGQLVAVGEHRISVAEFERRWKLKLREEVREAAPPNGLSLIRVGYETMIFPENIAFDSFPFFSLSTSDPPPSPQ</sequence>
<dbReference type="EC" id="5.4.99.12" evidence="1"/>
<dbReference type="EMBL" id="CP000878">
    <property type="protein sequence ID" value="ABX09584.1"/>
    <property type="molecule type" value="Genomic_DNA"/>
</dbReference>
<dbReference type="RefSeq" id="WP_012196205.1">
    <property type="nucleotide sequence ID" value="NC_009976.1"/>
</dbReference>
<dbReference type="SMR" id="A9BCM2"/>
<dbReference type="STRING" id="93059.P9211_16531"/>
<dbReference type="KEGG" id="pmj:P9211_16531"/>
<dbReference type="eggNOG" id="COG0101">
    <property type="taxonomic scope" value="Bacteria"/>
</dbReference>
<dbReference type="HOGENOM" id="CLU_014673_0_1_3"/>
<dbReference type="OrthoDB" id="9811823at2"/>
<dbReference type="Proteomes" id="UP000000788">
    <property type="component" value="Chromosome"/>
</dbReference>
<dbReference type="GO" id="GO:0003723">
    <property type="term" value="F:RNA binding"/>
    <property type="evidence" value="ECO:0007669"/>
    <property type="project" value="InterPro"/>
</dbReference>
<dbReference type="GO" id="GO:0160147">
    <property type="term" value="F:tRNA pseudouridine(38-40) synthase activity"/>
    <property type="evidence" value="ECO:0007669"/>
    <property type="project" value="UniProtKB-EC"/>
</dbReference>
<dbReference type="GO" id="GO:0031119">
    <property type="term" value="P:tRNA pseudouridine synthesis"/>
    <property type="evidence" value="ECO:0007669"/>
    <property type="project" value="UniProtKB-UniRule"/>
</dbReference>
<dbReference type="CDD" id="cd02570">
    <property type="entry name" value="PseudoU_synth_EcTruA"/>
    <property type="match status" value="1"/>
</dbReference>
<dbReference type="FunFam" id="3.30.70.580:FF:000001">
    <property type="entry name" value="tRNA pseudouridine synthase A"/>
    <property type="match status" value="1"/>
</dbReference>
<dbReference type="Gene3D" id="3.30.70.660">
    <property type="entry name" value="Pseudouridine synthase I, catalytic domain, C-terminal subdomain"/>
    <property type="match status" value="1"/>
</dbReference>
<dbReference type="Gene3D" id="3.30.70.580">
    <property type="entry name" value="Pseudouridine synthase I, catalytic domain, N-terminal subdomain"/>
    <property type="match status" value="1"/>
</dbReference>
<dbReference type="HAMAP" id="MF_00171">
    <property type="entry name" value="TruA"/>
    <property type="match status" value="1"/>
</dbReference>
<dbReference type="InterPro" id="IPR020103">
    <property type="entry name" value="PsdUridine_synth_cat_dom_sf"/>
</dbReference>
<dbReference type="InterPro" id="IPR001406">
    <property type="entry name" value="PsdUridine_synth_TruA"/>
</dbReference>
<dbReference type="InterPro" id="IPR020097">
    <property type="entry name" value="PsdUridine_synth_TruA_a/b_dom"/>
</dbReference>
<dbReference type="InterPro" id="IPR020095">
    <property type="entry name" value="PsdUridine_synth_TruA_C"/>
</dbReference>
<dbReference type="InterPro" id="IPR020094">
    <property type="entry name" value="TruA/RsuA/RluB/E/F_N"/>
</dbReference>
<dbReference type="NCBIfam" id="TIGR00071">
    <property type="entry name" value="hisT_truA"/>
    <property type="match status" value="1"/>
</dbReference>
<dbReference type="PANTHER" id="PTHR11142">
    <property type="entry name" value="PSEUDOURIDYLATE SYNTHASE"/>
    <property type="match status" value="1"/>
</dbReference>
<dbReference type="PANTHER" id="PTHR11142:SF0">
    <property type="entry name" value="TRNA PSEUDOURIDINE SYNTHASE-LIKE 1"/>
    <property type="match status" value="1"/>
</dbReference>
<dbReference type="Pfam" id="PF01416">
    <property type="entry name" value="PseudoU_synth_1"/>
    <property type="match status" value="2"/>
</dbReference>
<dbReference type="PIRSF" id="PIRSF001430">
    <property type="entry name" value="tRNA_psdUrid_synth"/>
    <property type="match status" value="1"/>
</dbReference>
<dbReference type="SUPFAM" id="SSF55120">
    <property type="entry name" value="Pseudouridine synthase"/>
    <property type="match status" value="1"/>
</dbReference>
<protein>
    <recommendedName>
        <fullName evidence="1">tRNA pseudouridine synthase A</fullName>
        <ecNumber evidence="1">5.4.99.12</ecNumber>
    </recommendedName>
    <alternativeName>
        <fullName evidence="1">tRNA pseudouridine(38-40) synthase</fullName>
    </alternativeName>
    <alternativeName>
        <fullName evidence="1">tRNA pseudouridylate synthase I</fullName>
    </alternativeName>
    <alternativeName>
        <fullName evidence="1">tRNA-uridine isomerase I</fullName>
    </alternativeName>
</protein>
<proteinExistence type="inferred from homology"/>
<evidence type="ECO:0000255" key="1">
    <source>
        <dbReference type="HAMAP-Rule" id="MF_00171"/>
    </source>
</evidence>
<accession>A9BCM2</accession>
<feature type="chain" id="PRO_1000097770" description="tRNA pseudouridine synthase A">
    <location>
        <begin position="1"/>
        <end position="289"/>
    </location>
</feature>
<feature type="active site" description="Nucleophile" evidence="1">
    <location>
        <position position="67"/>
    </location>
</feature>
<feature type="binding site" evidence="1">
    <location>
        <position position="125"/>
    </location>
    <ligand>
        <name>substrate</name>
    </ligand>
</feature>
<keyword id="KW-0413">Isomerase</keyword>
<keyword id="KW-1185">Reference proteome</keyword>
<keyword id="KW-0819">tRNA processing</keyword>